<keyword id="KW-0002">3D-structure</keyword>
<keyword id="KW-0025">Alternative splicing</keyword>
<keyword id="KW-0963">Cytoplasm</keyword>
<keyword id="KW-0238">DNA-binding</keyword>
<keyword id="KW-0507">mRNA processing</keyword>
<keyword id="KW-0508">mRNA splicing</keyword>
<keyword id="KW-0539">Nucleus</keyword>
<keyword id="KW-1185">Reference proteome</keyword>
<keyword id="KW-0694">RNA-binding</keyword>
<keyword id="KW-0964">Secreted</keyword>
<keyword id="KW-0804">Transcription</keyword>
<keyword id="KW-0805">Transcription regulation</keyword>
<evidence type="ECO:0000250" key="1">
    <source>
        <dbReference type="UniProtKB" id="P62960"/>
    </source>
</evidence>
<evidence type="ECO:0000250" key="2">
    <source>
        <dbReference type="UniProtKB" id="P67809"/>
    </source>
</evidence>
<evidence type="ECO:0000255" key="3">
    <source>
        <dbReference type="PROSITE-ProRule" id="PRU01204"/>
    </source>
</evidence>
<evidence type="ECO:0000256" key="4">
    <source>
        <dbReference type="SAM" id="MobiDB-lite"/>
    </source>
</evidence>
<evidence type="ECO:0000269" key="5">
    <source>
    </source>
</evidence>
<evidence type="ECO:0000269" key="6">
    <source>
    </source>
</evidence>
<evidence type="ECO:0000303" key="7">
    <source>
    </source>
</evidence>
<evidence type="ECO:0000303" key="8">
    <source>
    </source>
</evidence>
<evidence type="ECO:0000305" key="9"/>
<evidence type="ECO:0000312" key="10">
    <source>
        <dbReference type="ZFIN" id="ZDB-GENE-000629-3"/>
    </source>
</evidence>
<evidence type="ECO:0007744" key="11">
    <source>
        <dbReference type="PDB" id="6A6J"/>
    </source>
</evidence>
<comment type="function">
    <text evidence="2 5 6">DNA- and RNA-binding protein involved in various processes, such as translational repression, RNA stabilization, mRNA splicing and transcription regulation (PubMed:30135188, PubMed:31399345). Binds preferentially to the 5'-[CU]CUGCG-3' RNA motif and specifically recognizes mRNA transcripts modified by C5-methylcytosine (m5C) (PubMed:31399345). Promotes mRNA stabilization: acts by binding to m5C-containing mRNAs and recruiting pabpc1a, thereby preventing mRNA decay (PubMed:31399345). Plays a role in the maternal-to-zygotic transition in early embryo by binding to m5C-containing maternal mRNAs and preventing their degradation (PubMed:31399345). Also promotes maternal-to-zygotic transition in oocytes and embryos by promoting translation repression; molecular mechanisms governing translation repression are unknown (PubMed:30135188). Plays a key role in RNA composition of extracellular exosomes by defining the sorting of small non-coding RNAs, such as tRNAs, Y RNAs, Vault RNAs and miRNAs. Probably sorts RNAs in exosomes by recognizing and binding C5-methylcytosine (m5C)-containing RNAs (By similarity). Acts as a key effector of epidermal progenitors by preventing epidermal progenitor senescence: acts by regulating the translation of a senescence-associated subset of cytokine mRNAs, possibly by binding to m5C-containing mRNAs (By similarity). Also involved in pre-mRNA alternative splicing regulation: binds to splice sites in pre-mRNA and regulates splice site selection (By similarity). Also able to bind DNA and regulate transcription. Binds to promoters that contain a Y-box (5'-CTGATTGGCCAA-3'). Promotes separation of DNA strands that contain mismatches or are modified by cisplatin. Has endonucleolytic activity and can introduce nicks or breaks into double-stranded DNA, suggesting a role in DNA repair. The secreted form acts as an extracellular mitogen and stimulates cell migration and proliferation (By similarity).</text>
</comment>
<comment type="subunit">
    <text evidence="6">Interacts with pabpc1a; leading to pabpc1a recruitment on C5-methylcytosine (m5C)-containing mRNAs.</text>
</comment>
<comment type="subcellular location">
    <subcellularLocation>
        <location evidence="2">Cytoplasm</location>
    </subcellularLocation>
    <subcellularLocation>
        <location evidence="2">Nucleus</location>
    </subcellularLocation>
    <subcellularLocation>
        <location evidence="2">Cytoplasmic granule</location>
    </subcellularLocation>
    <subcellularLocation>
        <location evidence="2">Secreted</location>
    </subcellularLocation>
    <subcellularLocation>
        <location evidence="2">Secreted</location>
        <location evidence="2">Extracellular exosome</location>
    </subcellularLocation>
    <subcellularLocation>
        <location evidence="1">Cytoplasm</location>
        <location evidence="1">P-body</location>
    </subcellularLocation>
</comment>
<comment type="alternative products">
    <event type="alternative splicing"/>
    <isoform>
        <id>B5DE31-1</id>
        <name>1</name>
        <sequence type="displayed"/>
    </isoform>
    <isoform>
        <id>B5DE31-2</id>
        <name>2</name>
        <sequence type="described" ref="VSP_060390"/>
    </isoform>
</comment>
<comment type="developmental stage">
    <text evidence="6">Expressed both maternally and zygotically.</text>
</comment>
<comment type="domain">
    <text evidence="6">In the CSD domain, Trp-45 specifically recognizes C5-methylcytosine (m5C) modification through its indole ring.</text>
</comment>
<comment type="disruption phenotype">
    <text evidence="5 6">Embryonic lethality caused by early gastrulation arrest: maternal mutant embryos fail to undergo normal cleavage and the maternal-to-zygotic transition (PubMed:30135188, PubMed:31399345). Early embryos show severe developmental arrest at the shield stage in maternal ybx1 knockout embryos, leading to lethality at 8 hours post-fertilization (hpf) (PubMed:31399345).</text>
</comment>
<comment type="similarity">
    <text evidence="9">Belongs to the YBX1 family.</text>
</comment>
<reference key="1">
    <citation type="journal article" date="1999" name="Biochim. Biophys. Acta">
        <title>Molecular cloning of a cold-shock domain protein, zfY1, in zebrafish embryo.</title>
        <authorList>
            <person name="Chang B.E."/>
            <person name="Lin C.Y."/>
            <person name="Kuo C.M."/>
        </authorList>
    </citation>
    <scope>NUCLEOTIDE SEQUENCE [MRNA] (ISOFORM 1)</scope>
</reference>
<reference key="2">
    <citation type="journal article" date="2013" name="Nature">
        <title>The zebrafish reference genome sequence and its relationship to the human genome.</title>
        <authorList>
            <person name="Howe K."/>
            <person name="Clark M.D."/>
            <person name="Torroja C.F."/>
            <person name="Torrance J."/>
            <person name="Berthelot C."/>
            <person name="Muffato M."/>
            <person name="Collins J.E."/>
            <person name="Humphray S."/>
            <person name="McLaren K."/>
            <person name="Matthews L."/>
            <person name="McLaren S."/>
            <person name="Sealy I."/>
            <person name="Caccamo M."/>
            <person name="Churcher C."/>
            <person name="Scott C."/>
            <person name="Barrett J.C."/>
            <person name="Koch R."/>
            <person name="Rauch G.J."/>
            <person name="White S."/>
            <person name="Chow W."/>
            <person name="Kilian B."/>
            <person name="Quintais L.T."/>
            <person name="Guerra-Assuncao J.A."/>
            <person name="Zhou Y."/>
            <person name="Gu Y."/>
            <person name="Yen J."/>
            <person name="Vogel J.H."/>
            <person name="Eyre T."/>
            <person name="Redmond S."/>
            <person name="Banerjee R."/>
            <person name="Chi J."/>
            <person name="Fu B."/>
            <person name="Langley E."/>
            <person name="Maguire S.F."/>
            <person name="Laird G.K."/>
            <person name="Lloyd D."/>
            <person name="Kenyon E."/>
            <person name="Donaldson S."/>
            <person name="Sehra H."/>
            <person name="Almeida-King J."/>
            <person name="Loveland J."/>
            <person name="Trevanion S."/>
            <person name="Jones M."/>
            <person name="Quail M."/>
            <person name="Willey D."/>
            <person name="Hunt A."/>
            <person name="Burton J."/>
            <person name="Sims S."/>
            <person name="McLay K."/>
            <person name="Plumb B."/>
            <person name="Davis J."/>
            <person name="Clee C."/>
            <person name="Oliver K."/>
            <person name="Clark R."/>
            <person name="Riddle C."/>
            <person name="Elliot D."/>
            <person name="Threadgold G."/>
            <person name="Harden G."/>
            <person name="Ware D."/>
            <person name="Begum S."/>
            <person name="Mortimore B."/>
            <person name="Kerry G."/>
            <person name="Heath P."/>
            <person name="Phillimore B."/>
            <person name="Tracey A."/>
            <person name="Corby N."/>
            <person name="Dunn M."/>
            <person name="Johnson C."/>
            <person name="Wood J."/>
            <person name="Clark S."/>
            <person name="Pelan S."/>
            <person name="Griffiths G."/>
            <person name="Smith M."/>
            <person name="Glithero R."/>
            <person name="Howden P."/>
            <person name="Barker N."/>
            <person name="Lloyd C."/>
            <person name="Stevens C."/>
            <person name="Harley J."/>
            <person name="Holt K."/>
            <person name="Panagiotidis G."/>
            <person name="Lovell J."/>
            <person name="Beasley H."/>
            <person name="Henderson C."/>
            <person name="Gordon D."/>
            <person name="Auger K."/>
            <person name="Wright D."/>
            <person name="Collins J."/>
            <person name="Raisen C."/>
            <person name="Dyer L."/>
            <person name="Leung K."/>
            <person name="Robertson L."/>
            <person name="Ambridge K."/>
            <person name="Leongamornlert D."/>
            <person name="McGuire S."/>
            <person name="Gilderthorp R."/>
            <person name="Griffiths C."/>
            <person name="Manthravadi D."/>
            <person name="Nichol S."/>
            <person name="Barker G."/>
            <person name="Whitehead S."/>
            <person name="Kay M."/>
            <person name="Brown J."/>
            <person name="Murnane C."/>
            <person name="Gray E."/>
            <person name="Humphries M."/>
            <person name="Sycamore N."/>
            <person name="Barker D."/>
            <person name="Saunders D."/>
            <person name="Wallis J."/>
            <person name="Babbage A."/>
            <person name="Hammond S."/>
            <person name="Mashreghi-Mohammadi M."/>
            <person name="Barr L."/>
            <person name="Martin S."/>
            <person name="Wray P."/>
            <person name="Ellington A."/>
            <person name="Matthews N."/>
            <person name="Ellwood M."/>
            <person name="Woodmansey R."/>
            <person name="Clark G."/>
            <person name="Cooper J."/>
            <person name="Tromans A."/>
            <person name="Grafham D."/>
            <person name="Skuce C."/>
            <person name="Pandian R."/>
            <person name="Andrews R."/>
            <person name="Harrison E."/>
            <person name="Kimberley A."/>
            <person name="Garnett J."/>
            <person name="Fosker N."/>
            <person name="Hall R."/>
            <person name="Garner P."/>
            <person name="Kelly D."/>
            <person name="Bird C."/>
            <person name="Palmer S."/>
            <person name="Gehring I."/>
            <person name="Berger A."/>
            <person name="Dooley C.M."/>
            <person name="Ersan-Urun Z."/>
            <person name="Eser C."/>
            <person name="Geiger H."/>
            <person name="Geisler M."/>
            <person name="Karotki L."/>
            <person name="Kirn A."/>
            <person name="Konantz J."/>
            <person name="Konantz M."/>
            <person name="Oberlander M."/>
            <person name="Rudolph-Geiger S."/>
            <person name="Teucke M."/>
            <person name="Lanz C."/>
            <person name="Raddatz G."/>
            <person name="Osoegawa K."/>
            <person name="Zhu B."/>
            <person name="Rapp A."/>
            <person name="Widaa S."/>
            <person name="Langford C."/>
            <person name="Yang F."/>
            <person name="Schuster S.C."/>
            <person name="Carter N.P."/>
            <person name="Harrow J."/>
            <person name="Ning Z."/>
            <person name="Herrero J."/>
            <person name="Searle S.M."/>
            <person name="Enright A."/>
            <person name="Geisler R."/>
            <person name="Plasterk R.H."/>
            <person name="Lee C."/>
            <person name="Westerfield M."/>
            <person name="de Jong P.J."/>
            <person name="Zon L.I."/>
            <person name="Postlethwait J.H."/>
            <person name="Nusslein-Volhard C."/>
            <person name="Hubbard T.J."/>
            <person name="Roest Crollius H."/>
            <person name="Rogers J."/>
            <person name="Stemple D.L."/>
        </authorList>
    </citation>
    <scope>NUCLEOTIDE SEQUENCE [LARGE SCALE GENOMIC DNA]</scope>
    <source>
        <strain>Tuebingen</strain>
    </source>
</reference>
<reference key="3">
    <citation type="submission" date="2008-08" db="EMBL/GenBank/DDBJ databases">
        <authorList>
            <consortium name="NIH - Zebrafish Gene Collection (ZGC) project"/>
        </authorList>
    </citation>
    <scope>NUCLEOTIDE SEQUENCE [LARGE SCALE MRNA] (ISOFORMS 1 AND 2)</scope>
    <source>
        <tissue>Embryo</tissue>
    </source>
</reference>
<reference key="4">
    <citation type="journal article" date="2018" name="Development">
        <title>Maternal Ybx1 safeguards zebrafish oocyte maturation and maternal-to-zygotic transition by repressing global translation.</title>
        <authorList>
            <person name="Sun J."/>
            <person name="Yan L."/>
            <person name="Shen W."/>
            <person name="Meng A."/>
        </authorList>
    </citation>
    <scope>FUNCTION</scope>
    <scope>DISRUPTION PHENOTYPE</scope>
</reference>
<reference evidence="11" key="5">
    <citation type="journal article" date="2019" name="Mol. Cell">
        <title>RNA 5-methylcytosine facilitates the maternal-to-zygotic transition by preventing maternal mRNA decay.</title>
        <authorList>
            <person name="Yang Y."/>
            <person name="Wang L."/>
            <person name="Han X."/>
            <person name="Yang W.L."/>
            <person name="Zhang M."/>
            <person name="Ma H.L."/>
            <person name="Sun B.F."/>
            <person name="Li A."/>
            <person name="Xia J."/>
            <person name="Chen J."/>
            <person name="Heng J."/>
            <person name="Wu B."/>
            <person name="Chen Y.S."/>
            <person name="Xu J.W."/>
            <person name="Yang X."/>
            <person name="Yao H."/>
            <person name="Sun J."/>
            <person name="Lyu C."/>
            <person name="Wang H.L."/>
            <person name="Huang Y."/>
            <person name="Sun Y.P."/>
            <person name="Zhao Y.L."/>
            <person name="Meng A."/>
            <person name="Ma J."/>
            <person name="Liu F."/>
            <person name="Yang Y.G."/>
        </authorList>
    </citation>
    <scope>X-RAY CRYSTALLOGRAPHY (2.25 ANGSTROMS) OF 30-122 IN COMPLEX WITH METHYLATED RNA</scope>
    <scope>FUNCTION</scope>
    <scope>INTERACTION WITH PABPC1A</scope>
    <scope>DOMAIN</scope>
    <scope>DISRUPTION PHENOTYPE</scope>
    <scope>DEVELOPMENTAL STAGE</scope>
    <scope>MUTAGENESIS OF TRP-45</scope>
</reference>
<organism>
    <name type="scientific">Danio rerio</name>
    <name type="common">Zebrafish</name>
    <name type="synonym">Brachydanio rerio</name>
    <dbReference type="NCBI Taxonomy" id="7955"/>
    <lineage>
        <taxon>Eukaryota</taxon>
        <taxon>Metazoa</taxon>
        <taxon>Chordata</taxon>
        <taxon>Craniata</taxon>
        <taxon>Vertebrata</taxon>
        <taxon>Euteleostomi</taxon>
        <taxon>Actinopterygii</taxon>
        <taxon>Neopterygii</taxon>
        <taxon>Teleostei</taxon>
        <taxon>Ostariophysi</taxon>
        <taxon>Cypriniformes</taxon>
        <taxon>Danionidae</taxon>
        <taxon>Danioninae</taxon>
        <taxon>Danio</taxon>
    </lineage>
</organism>
<name>YBOX1_DANRE</name>
<sequence length="310" mass="35012">MSSEAETQQPPQPAADAESPSSPAAAATAGDKKVIATKVLGTVKWFNVRNGYGFINRNDTKEDVFVHQTAIKKNNPRKYLRSVGDGETVEFDVVEGEKGAEAANVTGPGGVPVQGSKYAADRNRYRRYPRRRAPPRDYQENYQSDPEAEPREKREGAESAPEGEMQQQQRRPTYPGRRRYPPYFVRRRYGRRPPYTNSQRGEMTEGGEGEENQGGPDQGNKPMRQNYYRGFRPSRGPSRPRPVRDGEEDKENQSESGQNQEPRQRRYRRNFNYRRRRPQTTKPQDGKDSKAADASADKSAAPEAEQGGAD</sequence>
<feature type="chain" id="PRO_0000448383" description="Y-box-binding protein 1">
    <location>
        <begin position="1"/>
        <end position="310"/>
    </location>
</feature>
<feature type="domain" description="CSD" evidence="3">
    <location>
        <begin position="38"/>
        <end position="107"/>
    </location>
</feature>
<feature type="region of interest" description="Disordered" evidence="4">
    <location>
        <begin position="1"/>
        <end position="31"/>
    </location>
</feature>
<feature type="region of interest" description="C5-methylcytosine binding" evidence="6 11">
    <location>
        <begin position="45"/>
        <end position="50"/>
    </location>
</feature>
<feature type="region of interest" description="Disordered" evidence="4">
    <location>
        <begin position="102"/>
        <end position="310"/>
    </location>
</feature>
<feature type="compositionally biased region" description="Low complexity" evidence="4">
    <location>
        <begin position="1"/>
        <end position="29"/>
    </location>
</feature>
<feature type="compositionally biased region" description="Basic residues" evidence="4">
    <location>
        <begin position="124"/>
        <end position="133"/>
    </location>
</feature>
<feature type="compositionally biased region" description="Basic and acidic residues" evidence="4">
    <location>
        <begin position="148"/>
        <end position="157"/>
    </location>
</feature>
<feature type="compositionally biased region" description="Basic residues" evidence="4">
    <location>
        <begin position="176"/>
        <end position="191"/>
    </location>
</feature>
<feature type="compositionally biased region" description="Basic and acidic residues" evidence="4">
    <location>
        <begin position="242"/>
        <end position="253"/>
    </location>
</feature>
<feature type="compositionally biased region" description="Basic residues" evidence="4">
    <location>
        <begin position="265"/>
        <end position="279"/>
    </location>
</feature>
<feature type="compositionally biased region" description="Low complexity" evidence="4">
    <location>
        <begin position="292"/>
        <end position="301"/>
    </location>
</feature>
<feature type="site" description="Important for C5-methylcytosine-recognition" evidence="6">
    <location>
        <position position="45"/>
    </location>
</feature>
<feature type="splice variant" id="VSP_060390" description="In isoform 2.">
    <location>
        <position position="234"/>
    </location>
</feature>
<feature type="mutagenesis site" description="Abolished binding to C5-methylcytosine (m5C)-containing mRNAs." evidence="6">
    <original>W</original>
    <variation>A</variation>
    <location>
        <position position="45"/>
    </location>
</feature>
<feature type="mutagenesis site" description="Decreased binding to C5-methylcytosine (m5C)-containing mRNAs. Decreased ability to discriminate between m5C-containing and unmethylated mRNAs." evidence="6">
    <original>W</original>
    <variation>F</variation>
    <location>
        <position position="45"/>
    </location>
</feature>
<feature type="sequence conflict" description="In Ref. 3; AAH70000." evidence="9" ref="3">
    <original>D</original>
    <variation>A</variation>
    <location>
        <position position="92"/>
    </location>
</feature>
<feature type="sequence conflict" description="In Ref. 1; AAC62774." evidence="9" ref="1">
    <original>S</original>
    <variation>P</variation>
    <location>
        <position position="238"/>
    </location>
</feature>
<accession>B5DE31</accession>
<accession>A0A0R4IK84</accession>
<accession>A1A605</accession>
<accession>F1RB19</accession>
<accession>O93584</accession>
<accession>Q6NSP3</accession>
<accession>Q7ZU03</accession>
<proteinExistence type="evidence at protein level"/>
<dbReference type="EMBL" id="AF093129">
    <property type="protein sequence ID" value="AAC62774.1"/>
    <property type="molecule type" value="mRNA"/>
</dbReference>
<dbReference type="EMBL" id="CR792439">
    <property type="status" value="NOT_ANNOTATED_CDS"/>
    <property type="molecule type" value="Genomic_DNA"/>
</dbReference>
<dbReference type="EMBL" id="BC050156">
    <property type="protein sequence ID" value="AAH50156.1"/>
    <property type="molecule type" value="mRNA"/>
</dbReference>
<dbReference type="EMBL" id="BC070000">
    <property type="protein sequence ID" value="AAH70000.1"/>
    <property type="molecule type" value="mRNA"/>
</dbReference>
<dbReference type="EMBL" id="BC128885">
    <property type="protein sequence ID" value="AAI28886.1"/>
    <property type="molecule type" value="mRNA"/>
</dbReference>
<dbReference type="EMBL" id="BC160650">
    <property type="protein sequence ID" value="AAI60650.1"/>
    <property type="molecule type" value="mRNA"/>
</dbReference>
<dbReference type="EMBL" id="BC168507">
    <property type="protein sequence ID" value="AAI68507.1"/>
    <property type="molecule type" value="mRNA"/>
</dbReference>
<dbReference type="RefSeq" id="NP_001119929.1">
    <molecule id="B5DE31-2"/>
    <property type="nucleotide sequence ID" value="NM_001126457.1"/>
</dbReference>
<dbReference type="RefSeq" id="NP_571695.1">
    <property type="nucleotide sequence ID" value="NM_131620.1"/>
</dbReference>
<dbReference type="PDB" id="6A6J">
    <property type="method" value="X-ray"/>
    <property type="resolution" value="2.25 A"/>
    <property type="chains" value="A/C=30-122"/>
</dbReference>
<dbReference type="PDBsum" id="6A6J"/>
<dbReference type="SMR" id="B5DE31"/>
<dbReference type="FunCoup" id="B5DE31">
    <property type="interactions" value="2163"/>
</dbReference>
<dbReference type="STRING" id="7955.ENSDARP00000010482"/>
<dbReference type="PaxDb" id="7955-ENSDARP00000010482"/>
<dbReference type="Ensembl" id="ENSDART00000110512">
    <molecule id="B5DE31-1"/>
    <property type="protein sequence ID" value="ENSDARP00000101517"/>
    <property type="gene ID" value="ENSDARG00000004757"/>
</dbReference>
<dbReference type="Ensembl" id="ENSDART00000163922">
    <molecule id="B5DE31-1"/>
    <property type="protein sequence ID" value="ENSDARP00000135135"/>
    <property type="gene ID" value="ENSDARG00000004757"/>
</dbReference>
<dbReference type="GeneID" id="795398"/>
<dbReference type="KEGG" id="dre:795398"/>
<dbReference type="AGR" id="ZFIN:ZDB-GENE-000629-3"/>
<dbReference type="CTD" id="4904"/>
<dbReference type="ZFIN" id="ZDB-GENE-000629-3">
    <property type="gene designation" value="ybx1"/>
</dbReference>
<dbReference type="eggNOG" id="KOG3070">
    <property type="taxonomic scope" value="Eukaryota"/>
</dbReference>
<dbReference type="HOGENOM" id="CLU_063071_1_0_1"/>
<dbReference type="InParanoid" id="B5DE31"/>
<dbReference type="OMA" id="RYYRRPF"/>
<dbReference type="OrthoDB" id="203339at2759"/>
<dbReference type="TreeFam" id="TF317306"/>
<dbReference type="Reactome" id="R-DRE-72163">
    <property type="pathway name" value="mRNA Splicing - Major Pathway"/>
</dbReference>
<dbReference type="Reactome" id="R-DRE-877300">
    <property type="pathway name" value="Interferon gamma signaling"/>
</dbReference>
<dbReference type="CD-CODE" id="2A88FC49">
    <property type="entry name" value="P-body"/>
</dbReference>
<dbReference type="PRO" id="PR:B5DE31"/>
<dbReference type="Proteomes" id="UP000000437">
    <property type="component" value="Chromosome 8"/>
</dbReference>
<dbReference type="Bgee" id="ENSDARG00000004757">
    <property type="expression patterns" value="Expressed in bone element and 32 other cell types or tissues"/>
</dbReference>
<dbReference type="ExpressionAtlas" id="B5DE31">
    <property type="expression patterns" value="baseline and differential"/>
</dbReference>
<dbReference type="GO" id="GO:0070062">
    <property type="term" value="C:extracellular exosome"/>
    <property type="evidence" value="ECO:0000250"/>
    <property type="project" value="UniProtKB"/>
</dbReference>
<dbReference type="GO" id="GO:0005634">
    <property type="term" value="C:nucleus"/>
    <property type="evidence" value="ECO:0000314"/>
    <property type="project" value="ZFIN"/>
</dbReference>
<dbReference type="GO" id="GO:0000932">
    <property type="term" value="C:P-body"/>
    <property type="evidence" value="ECO:0000314"/>
    <property type="project" value="ZFIN"/>
</dbReference>
<dbReference type="GO" id="GO:0062153">
    <property type="term" value="F:C5-methylcytidine-containing RNA reader activity"/>
    <property type="evidence" value="ECO:0000314"/>
    <property type="project" value="UniProtKB"/>
</dbReference>
<dbReference type="GO" id="GO:0008190">
    <property type="term" value="F:eukaryotic initiation factor 4E binding"/>
    <property type="evidence" value="ECO:0000314"/>
    <property type="project" value="ZFIN"/>
</dbReference>
<dbReference type="GO" id="GO:0008327">
    <property type="term" value="F:methyl-CpG binding"/>
    <property type="evidence" value="ECO:0000314"/>
    <property type="project" value="ZFIN"/>
</dbReference>
<dbReference type="GO" id="GO:0035198">
    <property type="term" value="F:miRNA binding"/>
    <property type="evidence" value="ECO:0000250"/>
    <property type="project" value="UniProtKB"/>
</dbReference>
<dbReference type="GO" id="GO:0003676">
    <property type="term" value="F:nucleic acid binding"/>
    <property type="evidence" value="ECO:0000318"/>
    <property type="project" value="GO_Central"/>
</dbReference>
<dbReference type="GO" id="GO:0003723">
    <property type="term" value="F:RNA binding"/>
    <property type="evidence" value="ECO:0000353"/>
    <property type="project" value="ZFIN"/>
</dbReference>
<dbReference type="GO" id="GO:0043009">
    <property type="term" value="P:chordate embryonic development"/>
    <property type="evidence" value="ECO:0000315"/>
    <property type="project" value="ZFIN"/>
</dbReference>
<dbReference type="GO" id="GO:0007343">
    <property type="term" value="P:egg activation"/>
    <property type="evidence" value="ECO:0000315"/>
    <property type="project" value="ZFIN"/>
</dbReference>
<dbReference type="GO" id="GO:0048598">
    <property type="term" value="P:embryonic morphogenesis"/>
    <property type="evidence" value="ECO:0000315"/>
    <property type="project" value="UniProtKB"/>
</dbReference>
<dbReference type="GO" id="GO:0008544">
    <property type="term" value="P:epidermis development"/>
    <property type="evidence" value="ECO:0000250"/>
    <property type="project" value="UniProtKB"/>
</dbReference>
<dbReference type="GO" id="GO:0051236">
    <property type="term" value="P:establishment of RNA localization"/>
    <property type="evidence" value="ECO:0000315"/>
    <property type="project" value="ZFIN"/>
</dbReference>
<dbReference type="GO" id="GO:1990428">
    <property type="term" value="P:miRNA transport"/>
    <property type="evidence" value="ECO:0000250"/>
    <property type="project" value="UniProtKB"/>
</dbReference>
<dbReference type="GO" id="GO:0006397">
    <property type="term" value="P:mRNA processing"/>
    <property type="evidence" value="ECO:0007669"/>
    <property type="project" value="UniProtKB-KW"/>
</dbReference>
<dbReference type="GO" id="GO:0048255">
    <property type="term" value="P:mRNA stabilization"/>
    <property type="evidence" value="ECO:0000315"/>
    <property type="project" value="UniProtKB"/>
</dbReference>
<dbReference type="GO" id="GO:2000773">
    <property type="term" value="P:negative regulation of cellular senescence"/>
    <property type="evidence" value="ECO:0000250"/>
    <property type="project" value="UniProtKB"/>
</dbReference>
<dbReference type="GO" id="GO:0050686">
    <property type="term" value="P:negative regulation of mRNA processing"/>
    <property type="evidence" value="ECO:0000315"/>
    <property type="project" value="ZFIN"/>
</dbReference>
<dbReference type="GO" id="GO:0048025">
    <property type="term" value="P:negative regulation of mRNA splicing, via spliceosome"/>
    <property type="evidence" value="ECO:0000315"/>
    <property type="project" value="ZFIN"/>
</dbReference>
<dbReference type="GO" id="GO:0017148">
    <property type="term" value="P:negative regulation of translation"/>
    <property type="evidence" value="ECO:0000315"/>
    <property type="project" value="UniProtKB"/>
</dbReference>
<dbReference type="GO" id="GO:0045947">
    <property type="term" value="P:negative regulation of translational initiation"/>
    <property type="evidence" value="ECO:0000315"/>
    <property type="project" value="ZFIN"/>
</dbReference>
<dbReference type="GO" id="GO:0001556">
    <property type="term" value="P:oocyte maturation"/>
    <property type="evidence" value="ECO:0000315"/>
    <property type="project" value="ZFIN"/>
</dbReference>
<dbReference type="GO" id="GO:0010468">
    <property type="term" value="P:regulation of gene expression"/>
    <property type="evidence" value="ECO:0000318"/>
    <property type="project" value="GO_Central"/>
</dbReference>
<dbReference type="GO" id="GO:0008380">
    <property type="term" value="P:RNA splicing"/>
    <property type="evidence" value="ECO:0007669"/>
    <property type="project" value="UniProtKB-KW"/>
</dbReference>
<dbReference type="GO" id="GO:0050658">
    <property type="term" value="P:RNA transport"/>
    <property type="evidence" value="ECO:0000250"/>
    <property type="project" value="UniProtKB"/>
</dbReference>
<dbReference type="GO" id="GO:0051031">
    <property type="term" value="P:tRNA transport"/>
    <property type="evidence" value="ECO:0000250"/>
    <property type="project" value="UniProtKB"/>
</dbReference>
<dbReference type="CDD" id="cd04458">
    <property type="entry name" value="CSP_CDS"/>
    <property type="match status" value="1"/>
</dbReference>
<dbReference type="FunFam" id="2.40.50.140:FF:000054">
    <property type="entry name" value="Nuclease-sensitive element-binding protein 1"/>
    <property type="match status" value="1"/>
</dbReference>
<dbReference type="Gene3D" id="2.40.50.140">
    <property type="entry name" value="Nucleic acid-binding proteins"/>
    <property type="match status" value="1"/>
</dbReference>
<dbReference type="InterPro" id="IPR050181">
    <property type="entry name" value="Cold_shock_domain"/>
</dbReference>
<dbReference type="InterPro" id="IPR011129">
    <property type="entry name" value="CSD"/>
</dbReference>
<dbReference type="InterPro" id="IPR019844">
    <property type="entry name" value="CSD_CS"/>
</dbReference>
<dbReference type="InterPro" id="IPR002059">
    <property type="entry name" value="CSP_DNA-bd"/>
</dbReference>
<dbReference type="InterPro" id="IPR012340">
    <property type="entry name" value="NA-bd_OB-fold"/>
</dbReference>
<dbReference type="PANTHER" id="PTHR11544">
    <property type="entry name" value="COLD SHOCK DOMAIN CONTAINING PROTEINS"/>
    <property type="match status" value="1"/>
</dbReference>
<dbReference type="Pfam" id="PF00313">
    <property type="entry name" value="CSD"/>
    <property type="match status" value="1"/>
</dbReference>
<dbReference type="PRINTS" id="PR00050">
    <property type="entry name" value="COLDSHOCK"/>
</dbReference>
<dbReference type="SMART" id="SM00357">
    <property type="entry name" value="CSP"/>
    <property type="match status" value="1"/>
</dbReference>
<dbReference type="SUPFAM" id="SSF50249">
    <property type="entry name" value="Nucleic acid-binding proteins"/>
    <property type="match status" value="1"/>
</dbReference>
<dbReference type="PROSITE" id="PS00352">
    <property type="entry name" value="CSD_1"/>
    <property type="match status" value="1"/>
</dbReference>
<dbReference type="PROSITE" id="PS51857">
    <property type="entry name" value="CSD_2"/>
    <property type="match status" value="1"/>
</dbReference>
<gene>
    <name evidence="8 10" type="primary">ybx1</name>
</gene>
<protein>
    <recommendedName>
        <fullName evidence="8">Y-box-binding protein 1</fullName>
        <shortName evidence="7">YB-1</shortName>
        <shortName evidence="7">ZfY1</shortName>
    </recommendedName>
    <alternativeName>
        <fullName evidence="9">Y-box transcription factor</fullName>
    </alternativeName>
</protein>